<proteinExistence type="inferred from homology"/>
<sequence>MVRKSTRRTAKASEKPPETVVRCVCKSQEDIGDTWVQCDGCDCWQHASCVGLADKDIPESYYCEVCHSRSDVSSQVQNSPNKDEEHQTADLLASNEGNEKNNEENNVVSSDSKEAITKESGAELESSEPASTNSNVGMTTRSGRQSPRTPIGSTTPKSSHSPPSTRKRRGSVGTTATHTKRSKNAPKTSPKDASNETADQEKELSLHTSIDEIQNPVRKSVAKAWVSVFEKIIEKAKLEGVQGLEDLNSTSLALQLEHIMFMVLSYTTDHSLTPNNKYREKFRALRFNLVDDKNPAFRARVLKNEISFNDLVNLSSEEMANPDLKNLAEEIRQQSTENTVIKQHLIAPRDRLLDEDKLTQQDELGIAENDDAMFPKPPGELVAPISIAEEEPTIDSKSPTLPEHNPLSEDDTSNGDKAAKRKGSFNDTKPIVNVPSIVEIDDPTILDIVEEEPLARNDSFSSPYSPAEDMAEESEFFGMKEKIWTGKVKMATVSEFHANALNLFGDVSASHLFEILSATALIEGRISVSSVLQYFHALRKTPSKEIIAVLFVPTEQNSQGFDILYDYFVKRNRYGVLHSKSNSVKDAYIIPMPSGNSVPELLDLLPKVDLPKDRNFQYFMGLFVLNKSSSRHESVERATPITTSTNGIPSTYQSASGTPTNPVHSYPSLESIINALTPSDMLLIKDVVENNPQIRANPSLAINPQFMQNAISAAQKKASKQ</sequence>
<organism>
    <name type="scientific">Schizosaccharomyces pombe (strain 972 / ATCC 24843)</name>
    <name type="common">Fission yeast</name>
    <dbReference type="NCBI Taxonomy" id="284812"/>
    <lineage>
        <taxon>Eukaryota</taxon>
        <taxon>Fungi</taxon>
        <taxon>Dikarya</taxon>
        <taxon>Ascomycota</taxon>
        <taxon>Taphrinomycotina</taxon>
        <taxon>Schizosaccharomycetes</taxon>
        <taxon>Schizosaccharomycetales</taxon>
        <taxon>Schizosaccharomycetaceae</taxon>
        <taxon>Schizosaccharomyces</taxon>
    </lineage>
</organism>
<feature type="chain" id="PRO_0000116549" description="Transcription factor bye1">
    <location>
        <begin position="1"/>
        <end position="721"/>
    </location>
</feature>
<feature type="domain" description="TFIIS central" evidence="3">
    <location>
        <begin position="217"/>
        <end position="347"/>
    </location>
</feature>
<feature type="zinc finger region" description="PHD-type" evidence="2">
    <location>
        <begin position="20"/>
        <end position="69"/>
    </location>
</feature>
<feature type="region of interest" description="Disordered" evidence="4">
    <location>
        <begin position="93"/>
        <end position="209"/>
    </location>
</feature>
<feature type="region of interest" description="Disordered" evidence="4">
    <location>
        <begin position="391"/>
        <end position="426"/>
    </location>
</feature>
<feature type="region of interest" description="Disordered" evidence="4">
    <location>
        <begin position="636"/>
        <end position="661"/>
    </location>
</feature>
<feature type="compositionally biased region" description="Basic and acidic residues" evidence="4">
    <location>
        <begin position="111"/>
        <end position="121"/>
    </location>
</feature>
<feature type="compositionally biased region" description="Polar residues" evidence="4">
    <location>
        <begin position="128"/>
        <end position="152"/>
    </location>
</feature>
<feature type="compositionally biased region" description="Low complexity" evidence="4">
    <location>
        <begin position="153"/>
        <end position="164"/>
    </location>
</feature>
<feature type="compositionally biased region" description="Basic and acidic residues" evidence="4">
    <location>
        <begin position="189"/>
        <end position="205"/>
    </location>
</feature>
<feature type="compositionally biased region" description="Polar residues" evidence="4">
    <location>
        <begin position="640"/>
        <end position="661"/>
    </location>
</feature>
<feature type="sequence conflict" description="In Ref. 2; BAA87257." evidence="6" ref="2">
    <original>GNEK</original>
    <variation>RERE</variation>
    <location>
        <begin position="97"/>
        <end position="100"/>
    </location>
</feature>
<dbReference type="EMBL" id="CU329672">
    <property type="protein sequence ID" value="CAB39909.1"/>
    <property type="molecule type" value="Genomic_DNA"/>
</dbReference>
<dbReference type="EMBL" id="AB027885">
    <property type="protein sequence ID" value="BAA87189.1"/>
    <property type="molecule type" value="Genomic_DNA"/>
</dbReference>
<dbReference type="EMBL" id="AB027953">
    <property type="protein sequence ID" value="BAA87257.1"/>
    <property type="molecule type" value="Genomic_DNA"/>
</dbReference>
<dbReference type="PIR" id="T41530">
    <property type="entry name" value="T41530"/>
</dbReference>
<dbReference type="RefSeq" id="NP_588122.1">
    <property type="nucleotide sequence ID" value="NM_001023112.2"/>
</dbReference>
<dbReference type="SMR" id="Q9Y7V2"/>
<dbReference type="BioGRID" id="275285">
    <property type="interactions" value="23"/>
</dbReference>
<dbReference type="FunCoup" id="Q9Y7V2">
    <property type="interactions" value="288"/>
</dbReference>
<dbReference type="STRING" id="284812.Q9Y7V2"/>
<dbReference type="iPTMnet" id="Q9Y7V2"/>
<dbReference type="PaxDb" id="4896-SPCC645.13.1"/>
<dbReference type="EnsemblFungi" id="SPCC645.13.1">
    <property type="protein sequence ID" value="SPCC645.13.1:pep"/>
    <property type="gene ID" value="SPCC645.13"/>
</dbReference>
<dbReference type="PomBase" id="SPCC645.13">
    <property type="gene designation" value="bye1"/>
</dbReference>
<dbReference type="VEuPathDB" id="FungiDB:SPCC645.13"/>
<dbReference type="eggNOG" id="KOG1634">
    <property type="taxonomic scope" value="Eukaryota"/>
</dbReference>
<dbReference type="HOGENOM" id="CLU_024990_1_0_1"/>
<dbReference type="InParanoid" id="Q9Y7V2"/>
<dbReference type="OMA" id="AWISCET"/>
<dbReference type="PhylomeDB" id="Q9Y7V2"/>
<dbReference type="PRO" id="PR:Q9Y7V2"/>
<dbReference type="Proteomes" id="UP000002485">
    <property type="component" value="Chromosome III"/>
</dbReference>
<dbReference type="GO" id="GO:0000785">
    <property type="term" value="C:chromatin"/>
    <property type="evidence" value="ECO:0007669"/>
    <property type="project" value="UniProtKB-ARBA"/>
</dbReference>
<dbReference type="GO" id="GO:0005634">
    <property type="term" value="C:nucleus"/>
    <property type="evidence" value="ECO:0007005"/>
    <property type="project" value="PomBase"/>
</dbReference>
<dbReference type="GO" id="GO:0032991">
    <property type="term" value="C:protein-containing complex"/>
    <property type="evidence" value="ECO:0007669"/>
    <property type="project" value="UniProtKB-ARBA"/>
</dbReference>
<dbReference type="GO" id="GO:0003711">
    <property type="term" value="F:transcription elongation factor activity"/>
    <property type="evidence" value="ECO:0000250"/>
    <property type="project" value="PomBase"/>
</dbReference>
<dbReference type="GO" id="GO:0008270">
    <property type="term" value="F:zinc ion binding"/>
    <property type="evidence" value="ECO:0007669"/>
    <property type="project" value="UniProtKB-KW"/>
</dbReference>
<dbReference type="GO" id="GO:0006338">
    <property type="term" value="P:chromatin remodeling"/>
    <property type="evidence" value="ECO:0007669"/>
    <property type="project" value="UniProtKB-ARBA"/>
</dbReference>
<dbReference type="GO" id="GO:0006351">
    <property type="term" value="P:DNA-templated transcription"/>
    <property type="evidence" value="ECO:0007669"/>
    <property type="project" value="InterPro"/>
</dbReference>
<dbReference type="GO" id="GO:0034244">
    <property type="term" value="P:negative regulation of transcription elongation by RNA polymerase II"/>
    <property type="evidence" value="ECO:0000250"/>
    <property type="project" value="PomBase"/>
</dbReference>
<dbReference type="GO" id="GO:0006357">
    <property type="term" value="P:regulation of transcription by RNA polymerase II"/>
    <property type="evidence" value="ECO:0000318"/>
    <property type="project" value="GO_Central"/>
</dbReference>
<dbReference type="CDD" id="cd21538">
    <property type="entry name" value="SPOC_TFIIS"/>
    <property type="match status" value="1"/>
</dbReference>
<dbReference type="Gene3D" id="1.10.472.30">
    <property type="entry name" value="Transcription elongation factor S-II, central domain"/>
    <property type="match status" value="1"/>
</dbReference>
<dbReference type="Gene3D" id="3.30.40.10">
    <property type="entry name" value="Zinc/RING finger domain, C3HC4 (zinc finger)"/>
    <property type="match status" value="1"/>
</dbReference>
<dbReference type="InterPro" id="IPR012921">
    <property type="entry name" value="SPOC_C"/>
</dbReference>
<dbReference type="InterPro" id="IPR003618">
    <property type="entry name" value="TFIIS_cen_dom"/>
</dbReference>
<dbReference type="InterPro" id="IPR036575">
    <property type="entry name" value="TFIIS_cen_dom_sf"/>
</dbReference>
<dbReference type="InterPro" id="IPR019786">
    <property type="entry name" value="Zinc_finger_PHD-type_CS"/>
</dbReference>
<dbReference type="InterPro" id="IPR011011">
    <property type="entry name" value="Znf_FYVE_PHD"/>
</dbReference>
<dbReference type="InterPro" id="IPR001965">
    <property type="entry name" value="Znf_PHD"/>
</dbReference>
<dbReference type="InterPro" id="IPR019787">
    <property type="entry name" value="Znf_PHD-finger"/>
</dbReference>
<dbReference type="InterPro" id="IPR013083">
    <property type="entry name" value="Znf_RING/FYVE/PHD"/>
</dbReference>
<dbReference type="PANTHER" id="PTHR11477:SF11">
    <property type="entry name" value="TRANSCRIPTION FACTOR BYE1"/>
    <property type="match status" value="1"/>
</dbReference>
<dbReference type="PANTHER" id="PTHR11477">
    <property type="entry name" value="TRANSCRIPTION FACTOR S-II ZINC FINGER DOMAIN-CONTAINING PROTEIN"/>
    <property type="match status" value="1"/>
</dbReference>
<dbReference type="Pfam" id="PF20826">
    <property type="entry name" value="PHD_5"/>
    <property type="match status" value="1"/>
</dbReference>
<dbReference type="Pfam" id="PF07744">
    <property type="entry name" value="SPOC"/>
    <property type="match status" value="1"/>
</dbReference>
<dbReference type="Pfam" id="PF07500">
    <property type="entry name" value="TFIIS_M"/>
    <property type="match status" value="1"/>
</dbReference>
<dbReference type="SMART" id="SM00249">
    <property type="entry name" value="PHD"/>
    <property type="match status" value="1"/>
</dbReference>
<dbReference type="SMART" id="SM00510">
    <property type="entry name" value="TFS2M"/>
    <property type="match status" value="1"/>
</dbReference>
<dbReference type="SUPFAM" id="SSF46942">
    <property type="entry name" value="Elongation factor TFIIS domain 2"/>
    <property type="match status" value="1"/>
</dbReference>
<dbReference type="SUPFAM" id="SSF57903">
    <property type="entry name" value="FYVE/PHD zinc finger"/>
    <property type="match status" value="1"/>
</dbReference>
<dbReference type="PROSITE" id="PS51321">
    <property type="entry name" value="TFIIS_CENTRAL"/>
    <property type="match status" value="1"/>
</dbReference>
<dbReference type="PROSITE" id="PS01359">
    <property type="entry name" value="ZF_PHD_1"/>
    <property type="match status" value="1"/>
</dbReference>
<dbReference type="PROSITE" id="PS50016">
    <property type="entry name" value="ZF_PHD_2"/>
    <property type="match status" value="1"/>
</dbReference>
<gene>
    <name type="primary">bye1</name>
    <name type="ORF">SPCC645.13</name>
</gene>
<evidence type="ECO:0000250" key="1"/>
<evidence type="ECO:0000255" key="2">
    <source>
        <dbReference type="PROSITE-ProRule" id="PRU00146"/>
    </source>
</evidence>
<evidence type="ECO:0000255" key="3">
    <source>
        <dbReference type="PROSITE-ProRule" id="PRU00651"/>
    </source>
</evidence>
<evidence type="ECO:0000256" key="4">
    <source>
        <dbReference type="SAM" id="MobiDB-lite"/>
    </source>
</evidence>
<evidence type="ECO:0000269" key="5">
    <source>
    </source>
</evidence>
<evidence type="ECO:0000305" key="6"/>
<protein>
    <recommendedName>
        <fullName>Transcription factor bye1</fullName>
    </recommendedName>
</protein>
<reference key="1">
    <citation type="journal article" date="2002" name="Nature">
        <title>The genome sequence of Schizosaccharomyces pombe.</title>
        <authorList>
            <person name="Wood V."/>
            <person name="Gwilliam R."/>
            <person name="Rajandream M.A."/>
            <person name="Lyne M.H."/>
            <person name="Lyne R."/>
            <person name="Stewart A."/>
            <person name="Sgouros J.G."/>
            <person name="Peat N."/>
            <person name="Hayles J."/>
            <person name="Baker S.G."/>
            <person name="Basham D."/>
            <person name="Bowman S."/>
            <person name="Brooks K."/>
            <person name="Brown D."/>
            <person name="Brown S."/>
            <person name="Chillingworth T."/>
            <person name="Churcher C.M."/>
            <person name="Collins M."/>
            <person name="Connor R."/>
            <person name="Cronin A."/>
            <person name="Davis P."/>
            <person name="Feltwell T."/>
            <person name="Fraser A."/>
            <person name="Gentles S."/>
            <person name="Goble A."/>
            <person name="Hamlin N."/>
            <person name="Harris D.E."/>
            <person name="Hidalgo J."/>
            <person name="Hodgson G."/>
            <person name="Holroyd S."/>
            <person name="Hornsby T."/>
            <person name="Howarth S."/>
            <person name="Huckle E.J."/>
            <person name="Hunt S."/>
            <person name="Jagels K."/>
            <person name="James K.D."/>
            <person name="Jones L."/>
            <person name="Jones M."/>
            <person name="Leather S."/>
            <person name="McDonald S."/>
            <person name="McLean J."/>
            <person name="Mooney P."/>
            <person name="Moule S."/>
            <person name="Mungall K.L."/>
            <person name="Murphy L.D."/>
            <person name="Niblett D."/>
            <person name="Odell C."/>
            <person name="Oliver K."/>
            <person name="O'Neil S."/>
            <person name="Pearson D."/>
            <person name="Quail M.A."/>
            <person name="Rabbinowitsch E."/>
            <person name="Rutherford K.M."/>
            <person name="Rutter S."/>
            <person name="Saunders D."/>
            <person name="Seeger K."/>
            <person name="Sharp S."/>
            <person name="Skelton J."/>
            <person name="Simmonds M.N."/>
            <person name="Squares R."/>
            <person name="Squares S."/>
            <person name="Stevens K."/>
            <person name="Taylor K."/>
            <person name="Taylor R.G."/>
            <person name="Tivey A."/>
            <person name="Walsh S.V."/>
            <person name="Warren T."/>
            <person name="Whitehead S."/>
            <person name="Woodward J.R."/>
            <person name="Volckaert G."/>
            <person name="Aert R."/>
            <person name="Robben J."/>
            <person name="Grymonprez B."/>
            <person name="Weltjens I."/>
            <person name="Vanstreels E."/>
            <person name="Rieger M."/>
            <person name="Schaefer M."/>
            <person name="Mueller-Auer S."/>
            <person name="Gabel C."/>
            <person name="Fuchs M."/>
            <person name="Duesterhoeft A."/>
            <person name="Fritzc C."/>
            <person name="Holzer E."/>
            <person name="Moestl D."/>
            <person name="Hilbert H."/>
            <person name="Borzym K."/>
            <person name="Langer I."/>
            <person name="Beck A."/>
            <person name="Lehrach H."/>
            <person name="Reinhardt R."/>
            <person name="Pohl T.M."/>
            <person name="Eger P."/>
            <person name="Zimmermann W."/>
            <person name="Wedler H."/>
            <person name="Wambutt R."/>
            <person name="Purnelle B."/>
            <person name="Goffeau A."/>
            <person name="Cadieu E."/>
            <person name="Dreano S."/>
            <person name="Gloux S."/>
            <person name="Lelaure V."/>
            <person name="Mottier S."/>
            <person name="Galibert F."/>
            <person name="Aves S.J."/>
            <person name="Xiang Z."/>
            <person name="Hunt C."/>
            <person name="Moore K."/>
            <person name="Hurst S.M."/>
            <person name="Lucas M."/>
            <person name="Rochet M."/>
            <person name="Gaillardin C."/>
            <person name="Tallada V.A."/>
            <person name="Garzon A."/>
            <person name="Thode G."/>
            <person name="Daga R.R."/>
            <person name="Cruzado L."/>
            <person name="Jimenez J."/>
            <person name="Sanchez M."/>
            <person name="del Rey F."/>
            <person name="Benito J."/>
            <person name="Dominguez A."/>
            <person name="Revuelta J.L."/>
            <person name="Moreno S."/>
            <person name="Armstrong J."/>
            <person name="Forsburg S.L."/>
            <person name="Cerutti L."/>
            <person name="Lowe T."/>
            <person name="McCombie W.R."/>
            <person name="Paulsen I."/>
            <person name="Potashkin J."/>
            <person name="Shpakovski G.V."/>
            <person name="Ussery D."/>
            <person name="Barrell B.G."/>
            <person name="Nurse P."/>
        </authorList>
    </citation>
    <scope>NUCLEOTIDE SEQUENCE [LARGE SCALE GENOMIC DNA]</scope>
    <source>
        <strain>972 / ATCC 24843</strain>
    </source>
</reference>
<reference key="2">
    <citation type="journal article" date="2000" name="Genes Cells">
        <title>Large-scale screening of intracellular protein localization in living fission yeast cells by the use of a GFP-fusion genomic DNA library.</title>
        <authorList>
            <person name="Ding D.-Q."/>
            <person name="Tomita Y."/>
            <person name="Yamamoto A."/>
            <person name="Chikashige Y."/>
            <person name="Haraguchi T."/>
            <person name="Hiraoka Y."/>
        </authorList>
    </citation>
    <scope>NUCLEOTIDE SEQUENCE [LARGE SCALE GENOMIC DNA] OF 53-199</scope>
    <scope>SUBCELLULAR LOCATION</scope>
    <source>
        <strain>ATCC 38364 / 968</strain>
    </source>
</reference>
<name>BYE1_SCHPO</name>
<comment type="function">
    <text evidence="1">Negative regulator of transcription elongation.</text>
</comment>
<comment type="subcellular location">
    <subcellularLocation>
        <location evidence="3 5">Nucleus</location>
    </subcellularLocation>
</comment>
<comment type="similarity">
    <text evidence="6">Belongs to the BYE1 family.</text>
</comment>
<keyword id="KW-0479">Metal-binding</keyword>
<keyword id="KW-0539">Nucleus</keyword>
<keyword id="KW-1185">Reference proteome</keyword>
<keyword id="KW-0678">Repressor</keyword>
<keyword id="KW-0804">Transcription</keyword>
<keyword id="KW-0805">Transcription regulation</keyword>
<keyword id="KW-0862">Zinc</keyword>
<keyword id="KW-0863">Zinc-finger</keyword>
<accession>Q9Y7V2</accession>
<accession>Q1MXG6</accession>
<accession>Q9UTW8</accession>
<accession>Q9UU07</accession>